<organism>
    <name type="scientific">Thauera aromatica</name>
    <dbReference type="NCBI Taxonomy" id="59405"/>
    <lineage>
        <taxon>Bacteria</taxon>
        <taxon>Pseudomonadati</taxon>
        <taxon>Pseudomonadota</taxon>
        <taxon>Betaproteobacteria</taxon>
        <taxon>Rhodocyclales</taxon>
        <taxon>Zoogloeaceae</taxon>
        <taxon>Thauera</taxon>
    </lineage>
</organism>
<comment type="function">
    <text evidence="1">Catalyzes the ligation of benzoate and CoA to form benzoyl-CoA at the expense of ATP. The enzyme also ligates 2-aminobenzoate and CoA. The enzyme shows activity toward a number of benzoate derivatives.</text>
</comment>
<comment type="catalytic activity">
    <reaction>
        <text>benzoate + ATP + CoA = benzoyl-CoA + AMP + diphosphate</text>
        <dbReference type="Rhea" id="RHEA:10132"/>
        <dbReference type="ChEBI" id="CHEBI:16150"/>
        <dbReference type="ChEBI" id="CHEBI:30616"/>
        <dbReference type="ChEBI" id="CHEBI:33019"/>
        <dbReference type="ChEBI" id="CHEBI:57287"/>
        <dbReference type="ChEBI" id="CHEBI:57369"/>
        <dbReference type="ChEBI" id="CHEBI:456215"/>
        <dbReference type="EC" id="6.2.1.25"/>
    </reaction>
</comment>
<comment type="biophysicochemical properties">
    <kinetics>
        <KM evidence="1">25 uM for benzoate</KM>
        <KM evidence="1">150 uM for 2-aminobenzoate</KM>
        <KM evidence="1">370 uM for ATP</KM>
        <KM evidence="1">160 uM for CoA</KM>
        <Vmax evidence="1">16.5 umol/min/mg enzyme with benzoate as substrate</Vmax>
        <Vmax evidence="1">9.9 umol/min/mg enzyme with 2-aminobenzoate as substrate</Vmax>
    </kinetics>
    <phDependence>
        <text evidence="1">Optimum pH is 8.5.</text>
    </phDependence>
</comment>
<comment type="subunit">
    <text evidence="1">Monomer.</text>
</comment>
<comment type="induction">
    <text evidence="1">By benzoate and 2-aminobenzoate.</text>
</comment>
<comment type="similarity">
    <text evidence="2">Belongs to the ATP-dependent AMP-binding enzyme family. Benzoate-CoA ligase subfamily.</text>
</comment>
<dbReference type="EC" id="6.2.1.25"/>
<dbReference type="EMBL" id="AF373594">
    <property type="protein sequence ID" value="AAN32623.1"/>
    <property type="molecule type" value="Genomic_DNA"/>
</dbReference>
<dbReference type="SMR" id="Q8GQN9"/>
<dbReference type="BioCyc" id="MetaCyc:MONOMER-3061"/>
<dbReference type="BRENDA" id="6.2.1.25">
    <property type="organism ID" value="6271"/>
</dbReference>
<dbReference type="GO" id="GO:0005524">
    <property type="term" value="F:ATP binding"/>
    <property type="evidence" value="ECO:0007669"/>
    <property type="project" value="UniProtKB-KW"/>
</dbReference>
<dbReference type="GO" id="GO:0018858">
    <property type="term" value="F:benzoate-CoA ligase activity"/>
    <property type="evidence" value="ECO:0007669"/>
    <property type="project" value="UniProtKB-EC"/>
</dbReference>
<dbReference type="GO" id="GO:0044550">
    <property type="term" value="P:secondary metabolite biosynthetic process"/>
    <property type="evidence" value="ECO:0007669"/>
    <property type="project" value="TreeGrafter"/>
</dbReference>
<dbReference type="CDD" id="cd05959">
    <property type="entry name" value="BCL_4HBCL"/>
    <property type="match status" value="1"/>
</dbReference>
<dbReference type="Gene3D" id="3.30.300.30">
    <property type="match status" value="1"/>
</dbReference>
<dbReference type="Gene3D" id="3.40.50.12820">
    <property type="match status" value="1"/>
</dbReference>
<dbReference type="Gene3D" id="3.40.50.980">
    <property type="match status" value="1"/>
</dbReference>
<dbReference type="Gene3D" id="2.30.38.10">
    <property type="entry name" value="Luciferase, Domain 3"/>
    <property type="match status" value="1"/>
</dbReference>
<dbReference type="InterPro" id="IPR025110">
    <property type="entry name" value="AMP-bd_C"/>
</dbReference>
<dbReference type="InterPro" id="IPR045851">
    <property type="entry name" value="AMP-bd_C_sf"/>
</dbReference>
<dbReference type="InterPro" id="IPR000873">
    <property type="entry name" value="AMP-dep_synth/lig_dom"/>
</dbReference>
<dbReference type="InterPro" id="IPR011957">
    <property type="entry name" value="Benz_CoA_lig"/>
</dbReference>
<dbReference type="NCBIfam" id="TIGR02262">
    <property type="entry name" value="benz_CoA_lig"/>
    <property type="match status" value="1"/>
</dbReference>
<dbReference type="PANTHER" id="PTHR43352">
    <property type="entry name" value="ACETYL-COA SYNTHETASE"/>
    <property type="match status" value="1"/>
</dbReference>
<dbReference type="PANTHER" id="PTHR43352:SF1">
    <property type="entry name" value="ANTHRANILATE--COA LIGASE"/>
    <property type="match status" value="1"/>
</dbReference>
<dbReference type="Pfam" id="PF00501">
    <property type="entry name" value="AMP-binding"/>
    <property type="match status" value="1"/>
</dbReference>
<dbReference type="Pfam" id="PF13193">
    <property type="entry name" value="AMP-binding_C"/>
    <property type="match status" value="1"/>
</dbReference>
<dbReference type="SUPFAM" id="SSF56801">
    <property type="entry name" value="Acetyl-CoA synthetase-like"/>
    <property type="match status" value="1"/>
</dbReference>
<protein>
    <recommendedName>
        <fullName>Benzoate--CoA ligase</fullName>
        <ecNumber>6.2.1.25</ecNumber>
    </recommendedName>
    <alternativeName>
        <fullName>Benzoyl-CoA synthetase</fullName>
    </alternativeName>
</protein>
<evidence type="ECO:0000269" key="1">
    <source>
    </source>
</evidence>
<evidence type="ECO:0000305" key="2"/>
<proteinExistence type="evidence at protein level"/>
<feature type="chain" id="PRO_0000350737" description="Benzoate--CoA ligase">
    <location>
        <begin position="1"/>
        <end position="527"/>
    </location>
</feature>
<name>BCLA_THAAR</name>
<sequence>MYTLSVADHSNTPPAIKIPERYNAADDLIGRNLLAGRGGKTVYIDDAGSYTYDELALRVNRCGSALRTTLGLQPKDRVLVCVLDGIDFPTTFLGAIKGGVVPIAINTLLTESDYEYMLTDSAARVAVVSQELLPLFAPMLGKVPTLEHLVVAGGAGEDSLAALLATGSEQFEAAPTRPDDHCFWLYSSGSTGAPKGTVHIHSDLIHTAELYARPILGIREGDVVFSAAKLFFAYGLGNGLIFPLAVGATAVLMAERPTPAAVFERLRRHQPDIFYGVPTLYASMLANPDCPKEGELRLRACTSAGEALPEDVGRRWQARFGVDILDGIGSTEMLHIFLSNRAGDVHYGTSGKPVPGYRLRLIDEDGAEITTAGVAGELQISGPSSAVMYWNNPEKTAATFMGEWTRSGDKYLVNDEGYYVYAGRSDDMLKVSGIYVSPIEVESALIAHEAVLEAAVVGWEDEDHLIKPKAFIVLKPGYGAGEALRTDLKAHVKNLLAPYKYPRWIEFVDDLPKTATGKIQRFKLRSA</sequence>
<gene>
    <name type="primary">bclA</name>
</gene>
<keyword id="KW-0067">ATP-binding</keyword>
<keyword id="KW-0903">Direct protein sequencing</keyword>
<keyword id="KW-0436">Ligase</keyword>
<keyword id="KW-0547">Nucleotide-binding</keyword>
<accession>Q8GQN9</accession>
<reference key="1">
    <citation type="journal article" date="2003" name="J. Bacteriol.">
        <title>Benzoate-coenzyme A ligase from Thauera aromatica: an enzyme acting in anaerobic and aerobic pathways.</title>
        <authorList>
            <person name="Schuehle K."/>
            <person name="Gescher J."/>
            <person name="Feil U."/>
            <person name="Paul M."/>
            <person name="Jahn M."/>
            <person name="Schaegger H."/>
            <person name="Fuchs G."/>
        </authorList>
    </citation>
    <scope>NUCLEOTIDE SEQUENCE [GENOMIC DNA]</scope>
    <scope>PROTEIN SEQUENCE OF 1-34</scope>
    <scope>FUNCTION</scope>
    <scope>SUBSTRATE SPECIFICITY</scope>
    <scope>BIOPHYSICOCHEMICAL PROPERTIES</scope>
    <scope>SUBUNIT</scope>
    <scope>INDUCTION</scope>
    <source>
        <strain>DSM 6984 / CIP 107765 / K172</strain>
    </source>
</reference>